<proteinExistence type="evidence at transcript level"/>
<gene>
    <name type="primary">HOX27</name>
    <name type="ORF">OsI_028496</name>
</gene>
<dbReference type="EMBL" id="CM000133">
    <property type="status" value="NOT_ANNOTATED_CDS"/>
    <property type="molecule type" value="Genomic_DNA"/>
</dbReference>
<dbReference type="EMBL" id="EF555548">
    <property type="protein sequence ID" value="ABQ57289.1"/>
    <property type="molecule type" value="mRNA"/>
</dbReference>
<dbReference type="SMR" id="A2YW03"/>
<dbReference type="STRING" id="39946.A2YW03"/>
<dbReference type="Proteomes" id="UP000007015">
    <property type="component" value="Chromosome 8"/>
</dbReference>
<dbReference type="GO" id="GO:0005634">
    <property type="term" value="C:nucleus"/>
    <property type="evidence" value="ECO:0007669"/>
    <property type="project" value="UniProtKB-SubCell"/>
</dbReference>
<dbReference type="GO" id="GO:0000981">
    <property type="term" value="F:DNA-binding transcription factor activity, RNA polymerase II-specific"/>
    <property type="evidence" value="ECO:0007669"/>
    <property type="project" value="InterPro"/>
</dbReference>
<dbReference type="GO" id="GO:0043565">
    <property type="term" value="F:sequence-specific DNA binding"/>
    <property type="evidence" value="ECO:0007669"/>
    <property type="project" value="InterPro"/>
</dbReference>
<dbReference type="CDD" id="cd00086">
    <property type="entry name" value="homeodomain"/>
    <property type="match status" value="1"/>
</dbReference>
<dbReference type="FunFam" id="1.10.10.60:FF:000577">
    <property type="entry name" value="Homeobox-leucine zipper protein 18"/>
    <property type="match status" value="1"/>
</dbReference>
<dbReference type="Gene3D" id="1.10.10.60">
    <property type="entry name" value="Homeodomain-like"/>
    <property type="match status" value="1"/>
</dbReference>
<dbReference type="InterPro" id="IPR001356">
    <property type="entry name" value="HD"/>
</dbReference>
<dbReference type="InterPro" id="IPR050762">
    <property type="entry name" value="HD-ZIP_Homeobox_LZ_Class_II"/>
</dbReference>
<dbReference type="InterPro" id="IPR017970">
    <property type="entry name" value="Homeobox_CS"/>
</dbReference>
<dbReference type="InterPro" id="IPR009057">
    <property type="entry name" value="Homeodomain-like_sf"/>
</dbReference>
<dbReference type="InterPro" id="IPR003106">
    <property type="entry name" value="Leu_zip_homeo"/>
</dbReference>
<dbReference type="PANTHER" id="PTHR45714">
    <property type="entry name" value="HOMEOBOX-LEUCINE ZIPPER PROTEIN HAT14"/>
    <property type="match status" value="1"/>
</dbReference>
<dbReference type="PANTHER" id="PTHR45714:SF22">
    <property type="entry name" value="HOMEOBOX-LEUCINE ZIPPER PROTEIN HOX27"/>
    <property type="match status" value="1"/>
</dbReference>
<dbReference type="Pfam" id="PF02183">
    <property type="entry name" value="HALZ"/>
    <property type="match status" value="1"/>
</dbReference>
<dbReference type="Pfam" id="PF00046">
    <property type="entry name" value="Homeodomain"/>
    <property type="match status" value="1"/>
</dbReference>
<dbReference type="SMART" id="SM00340">
    <property type="entry name" value="HALZ"/>
    <property type="match status" value="1"/>
</dbReference>
<dbReference type="SMART" id="SM00389">
    <property type="entry name" value="HOX"/>
    <property type="match status" value="1"/>
</dbReference>
<dbReference type="SUPFAM" id="SSF46689">
    <property type="entry name" value="Homeodomain-like"/>
    <property type="match status" value="1"/>
</dbReference>
<dbReference type="PROSITE" id="PS00027">
    <property type="entry name" value="HOMEOBOX_1"/>
    <property type="match status" value="1"/>
</dbReference>
<dbReference type="PROSITE" id="PS50071">
    <property type="entry name" value="HOMEOBOX_2"/>
    <property type="match status" value="1"/>
</dbReference>
<evidence type="ECO:0000250" key="1"/>
<evidence type="ECO:0000255" key="2">
    <source>
        <dbReference type="PROSITE-ProRule" id="PRU00108"/>
    </source>
</evidence>
<evidence type="ECO:0000256" key="3">
    <source>
        <dbReference type="SAM" id="MobiDB-lite"/>
    </source>
</evidence>
<evidence type="ECO:0000269" key="4">
    <source>
    </source>
</evidence>
<evidence type="ECO:0000305" key="5"/>
<sequence>MELGLSLGDAVTVADGGRLELVLGLGVGVGAGVRRGEEEERGRREDVVGAGRWAAMAAASPEPSVRLSLVSSLGLHWPSETGRSEAAARGFDVNRAPSVAAGAPGMEDDEEGPGAAPALSSSPNDSGGSFPLDLSGHGLRGHAEAAAQGGGGGGGGERSSSRASDDDEGASARKKLRLSKEQSAFLEESFKEHSTLNPKQKVALAKQLNLRPRQVEVWFQNRRARTKLKQTEVDCEYLKRCCETLTEENRRLHKELAELRALKTARPFYMHLPATTLSMCPSCERVASNPATASTSAPAAATSPAAAPTAAARTAVASPEPHRPSSFAALFAAPLGFPLTAAQPRPPPPASNCL</sequence>
<protein>
    <recommendedName>
        <fullName>Homeobox-leucine zipper protein HOX27</fullName>
    </recommendedName>
    <alternativeName>
        <fullName>HD-ZIP protein HOX27</fullName>
    </alternativeName>
    <alternativeName>
        <fullName>Homeodomain transcription factor HOX27</fullName>
    </alternativeName>
    <alternativeName>
        <fullName>OsHox27</fullName>
    </alternativeName>
</protein>
<feature type="chain" id="PRO_0000331725" description="Homeobox-leucine zipper protein HOX27">
    <location>
        <begin position="1"/>
        <end position="354"/>
    </location>
</feature>
<feature type="DNA-binding region" description="Homeobox" evidence="2">
    <location>
        <begin position="171"/>
        <end position="230"/>
    </location>
</feature>
<feature type="region of interest" description="Disordered" evidence="3">
    <location>
        <begin position="98"/>
        <end position="175"/>
    </location>
</feature>
<feature type="region of interest" description="Leucine-zipper">
    <location>
        <begin position="229"/>
        <end position="273"/>
    </location>
</feature>
<feature type="region of interest" description="Disordered" evidence="3">
    <location>
        <begin position="294"/>
        <end position="323"/>
    </location>
</feature>
<feature type="compositionally biased region" description="Gly residues" evidence="3">
    <location>
        <begin position="148"/>
        <end position="157"/>
    </location>
</feature>
<keyword id="KW-0238">DNA-binding</keyword>
<keyword id="KW-0371">Homeobox</keyword>
<keyword id="KW-0539">Nucleus</keyword>
<keyword id="KW-1185">Reference proteome</keyword>
<keyword id="KW-0804">Transcription</keyword>
<keyword id="KW-0805">Transcription regulation</keyword>
<accession>A2YW03</accession>
<accession>A5JPW3</accession>
<organism>
    <name type="scientific">Oryza sativa subsp. indica</name>
    <name type="common">Rice</name>
    <dbReference type="NCBI Taxonomy" id="39946"/>
    <lineage>
        <taxon>Eukaryota</taxon>
        <taxon>Viridiplantae</taxon>
        <taxon>Streptophyta</taxon>
        <taxon>Embryophyta</taxon>
        <taxon>Tracheophyta</taxon>
        <taxon>Spermatophyta</taxon>
        <taxon>Magnoliopsida</taxon>
        <taxon>Liliopsida</taxon>
        <taxon>Poales</taxon>
        <taxon>Poaceae</taxon>
        <taxon>BOP clade</taxon>
        <taxon>Oryzoideae</taxon>
        <taxon>Oryzeae</taxon>
        <taxon>Oryzinae</taxon>
        <taxon>Oryza</taxon>
        <taxon>Oryza sativa</taxon>
    </lineage>
</organism>
<reference key="1">
    <citation type="journal article" date="2005" name="PLoS Biol.">
        <title>The genomes of Oryza sativa: a history of duplications.</title>
        <authorList>
            <person name="Yu J."/>
            <person name="Wang J."/>
            <person name="Lin W."/>
            <person name="Li S."/>
            <person name="Li H."/>
            <person name="Zhou J."/>
            <person name="Ni P."/>
            <person name="Dong W."/>
            <person name="Hu S."/>
            <person name="Zeng C."/>
            <person name="Zhang J."/>
            <person name="Zhang Y."/>
            <person name="Li R."/>
            <person name="Xu Z."/>
            <person name="Li S."/>
            <person name="Li X."/>
            <person name="Zheng H."/>
            <person name="Cong L."/>
            <person name="Lin L."/>
            <person name="Yin J."/>
            <person name="Geng J."/>
            <person name="Li G."/>
            <person name="Shi J."/>
            <person name="Liu J."/>
            <person name="Lv H."/>
            <person name="Li J."/>
            <person name="Wang J."/>
            <person name="Deng Y."/>
            <person name="Ran L."/>
            <person name="Shi X."/>
            <person name="Wang X."/>
            <person name="Wu Q."/>
            <person name="Li C."/>
            <person name="Ren X."/>
            <person name="Wang J."/>
            <person name="Wang X."/>
            <person name="Li D."/>
            <person name="Liu D."/>
            <person name="Zhang X."/>
            <person name="Ji Z."/>
            <person name="Zhao W."/>
            <person name="Sun Y."/>
            <person name="Zhang Z."/>
            <person name="Bao J."/>
            <person name="Han Y."/>
            <person name="Dong L."/>
            <person name="Ji J."/>
            <person name="Chen P."/>
            <person name="Wu S."/>
            <person name="Liu J."/>
            <person name="Xiao Y."/>
            <person name="Bu D."/>
            <person name="Tan J."/>
            <person name="Yang L."/>
            <person name="Ye C."/>
            <person name="Zhang J."/>
            <person name="Xu J."/>
            <person name="Zhou Y."/>
            <person name="Yu Y."/>
            <person name="Zhang B."/>
            <person name="Zhuang S."/>
            <person name="Wei H."/>
            <person name="Liu B."/>
            <person name="Lei M."/>
            <person name="Yu H."/>
            <person name="Li Y."/>
            <person name="Xu H."/>
            <person name="Wei S."/>
            <person name="He X."/>
            <person name="Fang L."/>
            <person name="Zhang Z."/>
            <person name="Zhang Y."/>
            <person name="Huang X."/>
            <person name="Su Z."/>
            <person name="Tong W."/>
            <person name="Li J."/>
            <person name="Tong Z."/>
            <person name="Li S."/>
            <person name="Ye J."/>
            <person name="Wang L."/>
            <person name="Fang L."/>
            <person name="Lei T."/>
            <person name="Chen C.-S."/>
            <person name="Chen H.-C."/>
            <person name="Xu Z."/>
            <person name="Li H."/>
            <person name="Huang H."/>
            <person name="Zhang F."/>
            <person name="Xu H."/>
            <person name="Li N."/>
            <person name="Zhao C."/>
            <person name="Li S."/>
            <person name="Dong L."/>
            <person name="Huang Y."/>
            <person name="Li L."/>
            <person name="Xi Y."/>
            <person name="Qi Q."/>
            <person name="Li W."/>
            <person name="Zhang B."/>
            <person name="Hu W."/>
            <person name="Zhang Y."/>
            <person name="Tian X."/>
            <person name="Jiao Y."/>
            <person name="Liang X."/>
            <person name="Jin J."/>
            <person name="Gao L."/>
            <person name="Zheng W."/>
            <person name="Hao B."/>
            <person name="Liu S.-M."/>
            <person name="Wang W."/>
            <person name="Yuan L."/>
            <person name="Cao M."/>
            <person name="McDermott J."/>
            <person name="Samudrala R."/>
            <person name="Wang J."/>
            <person name="Wong G.K.-S."/>
            <person name="Yang H."/>
        </authorList>
    </citation>
    <scope>NUCLEOTIDE SEQUENCE [LARGE SCALE GENOMIC DNA]</scope>
    <source>
        <strain>cv. 93-11</strain>
    </source>
</reference>
<reference key="2">
    <citation type="journal article" date="2008" name="Plant Mol. Biol.">
        <title>A genome-wide survey of HD-Zip genes in rice and analysis of drought-responsive family members.</title>
        <authorList>
            <person name="Agalou A."/>
            <person name="Purwantomo S."/>
            <person name="Oevernaes E."/>
            <person name="Johannesson H."/>
            <person name="Zhu X."/>
            <person name="Estiati A."/>
            <person name="de Kam R.J."/>
            <person name="Engstroem P."/>
            <person name="Slamet-Loedin I.H."/>
            <person name="Zhu Z."/>
            <person name="Wang M."/>
            <person name="Xiong L."/>
            <person name="Meijer A.H."/>
            <person name="Ouwerkerk P.B.F."/>
        </authorList>
    </citation>
    <scope>NUCLEOTIDE SEQUENCE [MRNA] OF 205-335</scope>
    <scope>TISSUE SPECIFICITY</scope>
    <scope>GENE FAMILY</scope>
    <scope>NOMENCLATURE</scope>
    <source>
        <strain>cv. Minghui 86</strain>
    </source>
</reference>
<comment type="function">
    <text evidence="1">Probable transcription factor.</text>
</comment>
<comment type="subcellular location">
    <subcellularLocation>
        <location evidence="5">Nucleus</location>
    </subcellularLocation>
</comment>
<comment type="tissue specificity">
    <text evidence="4">Expressed in seedlings, roots, stems, leaf sheaths and blades and panicles.</text>
</comment>
<comment type="similarity">
    <text evidence="5">Belongs to the HD-ZIP homeobox family. Class II subfamily.</text>
</comment>
<name>HOX27_ORYSI</name>